<keyword id="KW-0963">Cytoplasm</keyword>
<keyword id="KW-0227">DNA damage</keyword>
<keyword id="KW-0234">DNA repair</keyword>
<keyword id="KW-0235">DNA replication</keyword>
<keyword id="KW-0238">DNA-binding</keyword>
<keyword id="KW-0239">DNA-directed DNA polymerase</keyword>
<keyword id="KW-0460">Magnesium</keyword>
<keyword id="KW-0479">Metal-binding</keyword>
<keyword id="KW-0515">Mutator protein</keyword>
<keyword id="KW-0548">Nucleotidyltransferase</keyword>
<keyword id="KW-0808">Transferase</keyword>
<comment type="function">
    <text evidence="1">Poorly processive, error-prone DNA polymerase involved in untargeted mutagenesis. Copies undamaged DNA at stalled replication forks, which arise in vivo from mismatched or misaligned primer ends. These misaligned primers can be extended by PolIV. Exhibits no 3'-5' exonuclease (proofreading) activity. May be involved in translesional synthesis, in conjunction with the beta clamp from PolIII.</text>
</comment>
<comment type="catalytic activity">
    <reaction evidence="1">
        <text>DNA(n) + a 2'-deoxyribonucleoside 5'-triphosphate = DNA(n+1) + diphosphate</text>
        <dbReference type="Rhea" id="RHEA:22508"/>
        <dbReference type="Rhea" id="RHEA-COMP:17339"/>
        <dbReference type="Rhea" id="RHEA-COMP:17340"/>
        <dbReference type="ChEBI" id="CHEBI:33019"/>
        <dbReference type="ChEBI" id="CHEBI:61560"/>
        <dbReference type="ChEBI" id="CHEBI:173112"/>
        <dbReference type="EC" id="2.7.7.7"/>
    </reaction>
</comment>
<comment type="cofactor">
    <cofactor evidence="1">
        <name>Mg(2+)</name>
        <dbReference type="ChEBI" id="CHEBI:18420"/>
    </cofactor>
    <text evidence="1">Binds 2 magnesium ions per subunit.</text>
</comment>
<comment type="subunit">
    <text evidence="1">Monomer.</text>
</comment>
<comment type="subcellular location">
    <subcellularLocation>
        <location evidence="1">Cytoplasm</location>
    </subcellularLocation>
</comment>
<comment type="similarity">
    <text evidence="1">Belongs to the DNA polymerase type-Y family.</text>
</comment>
<gene>
    <name evidence="1" type="primary">dinB</name>
    <name type="ordered locus">SCH_0314</name>
</gene>
<protein>
    <recommendedName>
        <fullName evidence="1">DNA polymerase IV</fullName>
        <shortName evidence="1">Pol IV</shortName>
        <ecNumber evidence="1">2.7.7.7</ecNumber>
    </recommendedName>
</protein>
<dbReference type="EC" id="2.7.7.7" evidence="1"/>
<dbReference type="EMBL" id="AE017220">
    <property type="protein sequence ID" value="AAX64220.1"/>
    <property type="molecule type" value="Genomic_DNA"/>
</dbReference>
<dbReference type="RefSeq" id="WP_001226209.1">
    <property type="nucleotide sequence ID" value="NC_006905.1"/>
</dbReference>
<dbReference type="SMR" id="Q57SU1"/>
<dbReference type="KEGG" id="sec:SCH_0314"/>
<dbReference type="HOGENOM" id="CLU_012348_1_2_6"/>
<dbReference type="Proteomes" id="UP000000538">
    <property type="component" value="Chromosome"/>
</dbReference>
<dbReference type="GO" id="GO:0005829">
    <property type="term" value="C:cytosol"/>
    <property type="evidence" value="ECO:0007669"/>
    <property type="project" value="TreeGrafter"/>
</dbReference>
<dbReference type="GO" id="GO:0003684">
    <property type="term" value="F:damaged DNA binding"/>
    <property type="evidence" value="ECO:0007669"/>
    <property type="project" value="InterPro"/>
</dbReference>
<dbReference type="GO" id="GO:0003887">
    <property type="term" value="F:DNA-directed DNA polymerase activity"/>
    <property type="evidence" value="ECO:0007669"/>
    <property type="project" value="UniProtKB-UniRule"/>
</dbReference>
<dbReference type="GO" id="GO:0000287">
    <property type="term" value="F:magnesium ion binding"/>
    <property type="evidence" value="ECO:0007669"/>
    <property type="project" value="UniProtKB-UniRule"/>
</dbReference>
<dbReference type="GO" id="GO:0006261">
    <property type="term" value="P:DNA-templated DNA replication"/>
    <property type="evidence" value="ECO:0007669"/>
    <property type="project" value="UniProtKB-UniRule"/>
</dbReference>
<dbReference type="GO" id="GO:0042276">
    <property type="term" value="P:error-prone translesion synthesis"/>
    <property type="evidence" value="ECO:0007669"/>
    <property type="project" value="TreeGrafter"/>
</dbReference>
<dbReference type="GO" id="GO:0009432">
    <property type="term" value="P:SOS response"/>
    <property type="evidence" value="ECO:0007669"/>
    <property type="project" value="TreeGrafter"/>
</dbReference>
<dbReference type="CDD" id="cd03586">
    <property type="entry name" value="PolY_Pol_IV_kappa"/>
    <property type="match status" value="1"/>
</dbReference>
<dbReference type="FunFam" id="1.10.150.20:FF:000019">
    <property type="entry name" value="DNA polymerase IV"/>
    <property type="match status" value="1"/>
</dbReference>
<dbReference type="FunFam" id="3.30.1490.100:FF:000002">
    <property type="entry name" value="DNA polymerase IV"/>
    <property type="match status" value="1"/>
</dbReference>
<dbReference type="FunFam" id="3.30.70.270:FF:000002">
    <property type="entry name" value="DNA polymerase IV"/>
    <property type="match status" value="1"/>
</dbReference>
<dbReference type="FunFam" id="3.40.1170.60:FF:000001">
    <property type="entry name" value="DNA polymerase IV"/>
    <property type="match status" value="1"/>
</dbReference>
<dbReference type="Gene3D" id="3.30.70.270">
    <property type="match status" value="1"/>
</dbReference>
<dbReference type="Gene3D" id="3.40.1170.60">
    <property type="match status" value="1"/>
</dbReference>
<dbReference type="Gene3D" id="1.10.150.20">
    <property type="entry name" value="5' to 3' exonuclease, C-terminal subdomain"/>
    <property type="match status" value="1"/>
</dbReference>
<dbReference type="Gene3D" id="3.30.1490.100">
    <property type="entry name" value="DNA polymerase, Y-family, little finger domain"/>
    <property type="match status" value="1"/>
</dbReference>
<dbReference type="HAMAP" id="MF_01113">
    <property type="entry name" value="DNApol_IV"/>
    <property type="match status" value="1"/>
</dbReference>
<dbReference type="InterPro" id="IPR043502">
    <property type="entry name" value="DNA/RNA_pol_sf"/>
</dbReference>
<dbReference type="InterPro" id="IPR036775">
    <property type="entry name" value="DNA_pol_Y-fam_lit_finger_sf"/>
</dbReference>
<dbReference type="InterPro" id="IPR017961">
    <property type="entry name" value="DNA_pol_Y-fam_little_finger"/>
</dbReference>
<dbReference type="InterPro" id="IPR050116">
    <property type="entry name" value="DNA_polymerase-Y"/>
</dbReference>
<dbReference type="InterPro" id="IPR022880">
    <property type="entry name" value="DNApol_IV"/>
</dbReference>
<dbReference type="InterPro" id="IPR053848">
    <property type="entry name" value="IMS_HHH_1"/>
</dbReference>
<dbReference type="InterPro" id="IPR043128">
    <property type="entry name" value="Rev_trsase/Diguanyl_cyclase"/>
</dbReference>
<dbReference type="InterPro" id="IPR001126">
    <property type="entry name" value="UmuC"/>
</dbReference>
<dbReference type="NCBIfam" id="NF002677">
    <property type="entry name" value="PRK02406.1"/>
    <property type="match status" value="1"/>
</dbReference>
<dbReference type="PANTHER" id="PTHR11076:SF33">
    <property type="entry name" value="DNA POLYMERASE KAPPA"/>
    <property type="match status" value="1"/>
</dbReference>
<dbReference type="PANTHER" id="PTHR11076">
    <property type="entry name" value="DNA REPAIR POLYMERASE UMUC / TRANSFERASE FAMILY MEMBER"/>
    <property type="match status" value="1"/>
</dbReference>
<dbReference type="Pfam" id="PF00817">
    <property type="entry name" value="IMS"/>
    <property type="match status" value="1"/>
</dbReference>
<dbReference type="Pfam" id="PF11799">
    <property type="entry name" value="IMS_C"/>
    <property type="match status" value="1"/>
</dbReference>
<dbReference type="Pfam" id="PF21999">
    <property type="entry name" value="IMS_HHH_1"/>
    <property type="match status" value="1"/>
</dbReference>
<dbReference type="SUPFAM" id="SSF56672">
    <property type="entry name" value="DNA/RNA polymerases"/>
    <property type="match status" value="1"/>
</dbReference>
<dbReference type="SUPFAM" id="SSF100879">
    <property type="entry name" value="Lesion bypass DNA polymerase (Y-family), little finger domain"/>
    <property type="match status" value="1"/>
</dbReference>
<dbReference type="PROSITE" id="PS50173">
    <property type="entry name" value="UMUC"/>
    <property type="match status" value="1"/>
</dbReference>
<organism>
    <name type="scientific">Salmonella choleraesuis (strain SC-B67)</name>
    <dbReference type="NCBI Taxonomy" id="321314"/>
    <lineage>
        <taxon>Bacteria</taxon>
        <taxon>Pseudomonadati</taxon>
        <taxon>Pseudomonadota</taxon>
        <taxon>Gammaproteobacteria</taxon>
        <taxon>Enterobacterales</taxon>
        <taxon>Enterobacteriaceae</taxon>
        <taxon>Salmonella</taxon>
    </lineage>
</organism>
<proteinExistence type="inferred from homology"/>
<feature type="chain" id="PRO_1000084921" description="DNA polymerase IV">
    <location>
        <begin position="1"/>
        <end position="351"/>
    </location>
</feature>
<feature type="domain" description="UmuC" evidence="1">
    <location>
        <begin position="4"/>
        <end position="185"/>
    </location>
</feature>
<feature type="active site" evidence="1">
    <location>
        <position position="104"/>
    </location>
</feature>
<feature type="binding site" evidence="1">
    <location>
        <position position="8"/>
    </location>
    <ligand>
        <name>Mg(2+)</name>
        <dbReference type="ChEBI" id="CHEBI:18420"/>
    </ligand>
</feature>
<feature type="binding site" evidence="1">
    <location>
        <position position="103"/>
    </location>
    <ligand>
        <name>Mg(2+)</name>
        <dbReference type="ChEBI" id="CHEBI:18420"/>
    </ligand>
</feature>
<feature type="site" description="Substrate discrimination" evidence="1">
    <location>
        <position position="13"/>
    </location>
</feature>
<accession>Q57SU1</accession>
<evidence type="ECO:0000255" key="1">
    <source>
        <dbReference type="HAMAP-Rule" id="MF_01113"/>
    </source>
</evidence>
<name>DPO4_SALCH</name>
<sequence length="351" mass="39595">MRKIIHVDMDCFFAAVEMRDNPALRDIPIAIGGSRERRGVISTANYPARQFGVRSAMPTAMALKLCPHLTLLPGRFVAYKEASRHVRDIFSRYTSLIEPLSLDEAWLDVTDSPHCYGSATLIAREIRQTIFNELQLTASAGVAPVKFLAKIASDLNKPNGQYVITPADVPGFLKTLPLAKIPGVGKVSAAKLENMGLRTCGDIQQCDLAMLLKRFGKFGRVLWERSQGIDERDVNSERLRKSVGVERTLAEDIHEWSDCEAIIEHLYPELERRLAIVKPDLLIARQGVKLKFNDFQQTTQEHVWPQLNKEDLIITARKTWNERRGERGVRLVGLHVTLLDPQLERQLVLGL</sequence>
<reference key="1">
    <citation type="journal article" date="2005" name="Nucleic Acids Res.">
        <title>The genome sequence of Salmonella enterica serovar Choleraesuis, a highly invasive and resistant zoonotic pathogen.</title>
        <authorList>
            <person name="Chiu C.-H."/>
            <person name="Tang P."/>
            <person name="Chu C."/>
            <person name="Hu S."/>
            <person name="Bao Q."/>
            <person name="Yu J."/>
            <person name="Chou Y.-Y."/>
            <person name="Wang H.-S."/>
            <person name="Lee Y.-S."/>
        </authorList>
    </citation>
    <scope>NUCLEOTIDE SEQUENCE [LARGE SCALE GENOMIC DNA]</scope>
    <source>
        <strain>SC-B67</strain>
    </source>
</reference>